<dbReference type="EC" id="7.6.2.-" evidence="1"/>
<dbReference type="EMBL" id="CP000316">
    <property type="protein sequence ID" value="ABE42969.1"/>
    <property type="molecule type" value="Genomic_DNA"/>
</dbReference>
<dbReference type="RefSeq" id="WP_011481971.1">
    <property type="nucleotide sequence ID" value="NC_007948.1"/>
</dbReference>
<dbReference type="SMR" id="Q12ES3"/>
<dbReference type="STRING" id="296591.Bpro_1015"/>
<dbReference type="KEGG" id="pol:Bpro_1015"/>
<dbReference type="eggNOG" id="COG1136">
    <property type="taxonomic scope" value="Bacteria"/>
</dbReference>
<dbReference type="HOGENOM" id="CLU_000604_1_22_4"/>
<dbReference type="OrthoDB" id="9802264at2"/>
<dbReference type="Proteomes" id="UP000001983">
    <property type="component" value="Chromosome"/>
</dbReference>
<dbReference type="GO" id="GO:0005886">
    <property type="term" value="C:plasma membrane"/>
    <property type="evidence" value="ECO:0007669"/>
    <property type="project" value="UniProtKB-SubCell"/>
</dbReference>
<dbReference type="GO" id="GO:0005524">
    <property type="term" value="F:ATP binding"/>
    <property type="evidence" value="ECO:0007669"/>
    <property type="project" value="UniProtKB-KW"/>
</dbReference>
<dbReference type="GO" id="GO:0016887">
    <property type="term" value="F:ATP hydrolysis activity"/>
    <property type="evidence" value="ECO:0007669"/>
    <property type="project" value="InterPro"/>
</dbReference>
<dbReference type="GO" id="GO:0022857">
    <property type="term" value="F:transmembrane transporter activity"/>
    <property type="evidence" value="ECO:0007669"/>
    <property type="project" value="TreeGrafter"/>
</dbReference>
<dbReference type="GO" id="GO:0044874">
    <property type="term" value="P:lipoprotein localization to outer membrane"/>
    <property type="evidence" value="ECO:0007669"/>
    <property type="project" value="TreeGrafter"/>
</dbReference>
<dbReference type="GO" id="GO:0089705">
    <property type="term" value="P:protein localization to outer membrane"/>
    <property type="evidence" value="ECO:0007669"/>
    <property type="project" value="TreeGrafter"/>
</dbReference>
<dbReference type="CDD" id="cd03255">
    <property type="entry name" value="ABC_MJ0796_LolCDE_FtsE"/>
    <property type="match status" value="1"/>
</dbReference>
<dbReference type="FunFam" id="3.40.50.300:FF:000230">
    <property type="entry name" value="Lipoprotein-releasing system ATP-binding protein LolD"/>
    <property type="match status" value="1"/>
</dbReference>
<dbReference type="Gene3D" id="3.40.50.300">
    <property type="entry name" value="P-loop containing nucleotide triphosphate hydrolases"/>
    <property type="match status" value="1"/>
</dbReference>
<dbReference type="InterPro" id="IPR003593">
    <property type="entry name" value="AAA+_ATPase"/>
</dbReference>
<dbReference type="InterPro" id="IPR003439">
    <property type="entry name" value="ABC_transporter-like_ATP-bd"/>
</dbReference>
<dbReference type="InterPro" id="IPR017871">
    <property type="entry name" value="ABC_transporter-like_CS"/>
</dbReference>
<dbReference type="InterPro" id="IPR015854">
    <property type="entry name" value="ABC_transpr_LolD-like"/>
</dbReference>
<dbReference type="InterPro" id="IPR011924">
    <property type="entry name" value="LolD_lipo_ATP-bd"/>
</dbReference>
<dbReference type="InterPro" id="IPR017911">
    <property type="entry name" value="MacB-like_ATP-bd"/>
</dbReference>
<dbReference type="InterPro" id="IPR027417">
    <property type="entry name" value="P-loop_NTPase"/>
</dbReference>
<dbReference type="NCBIfam" id="TIGR02211">
    <property type="entry name" value="LolD_lipo_ex"/>
    <property type="match status" value="1"/>
</dbReference>
<dbReference type="PANTHER" id="PTHR24220">
    <property type="entry name" value="IMPORT ATP-BINDING PROTEIN"/>
    <property type="match status" value="1"/>
</dbReference>
<dbReference type="PANTHER" id="PTHR24220:SF689">
    <property type="entry name" value="LIPOPROTEIN-RELEASING SYSTEM ATP-BINDING PROTEIN LOLD"/>
    <property type="match status" value="1"/>
</dbReference>
<dbReference type="Pfam" id="PF00005">
    <property type="entry name" value="ABC_tran"/>
    <property type="match status" value="1"/>
</dbReference>
<dbReference type="SMART" id="SM00382">
    <property type="entry name" value="AAA"/>
    <property type="match status" value="1"/>
</dbReference>
<dbReference type="SUPFAM" id="SSF52540">
    <property type="entry name" value="P-loop containing nucleoside triphosphate hydrolases"/>
    <property type="match status" value="1"/>
</dbReference>
<dbReference type="PROSITE" id="PS00211">
    <property type="entry name" value="ABC_TRANSPORTER_1"/>
    <property type="match status" value="1"/>
</dbReference>
<dbReference type="PROSITE" id="PS50893">
    <property type="entry name" value="ABC_TRANSPORTER_2"/>
    <property type="match status" value="1"/>
</dbReference>
<dbReference type="PROSITE" id="PS51244">
    <property type="entry name" value="LOLD"/>
    <property type="match status" value="1"/>
</dbReference>
<accession>Q12ES3</accession>
<comment type="function">
    <text evidence="1">Part of the ABC transporter complex LolCDE involved in the translocation of mature outer membrane-directed lipoproteins, from the inner membrane to the periplasmic chaperone, LolA. Responsible for the formation of the LolA-lipoprotein complex in an ATP-dependent manner.</text>
</comment>
<comment type="subunit">
    <text evidence="1">The complex is composed of two ATP-binding proteins (LolD) and two transmembrane proteins (LolC and LolE).</text>
</comment>
<comment type="subcellular location">
    <subcellularLocation>
        <location evidence="1">Cell inner membrane</location>
        <topology evidence="1">Peripheral membrane protein</topology>
    </subcellularLocation>
</comment>
<comment type="similarity">
    <text evidence="1">Belongs to the ABC transporter superfamily. Lipoprotein translocase (TC 3.A.1.125) family.</text>
</comment>
<gene>
    <name evidence="1" type="primary">lolD</name>
    <name type="ordered locus">Bpro_1015</name>
</gene>
<feature type="chain" id="PRO_0000272120" description="Lipoprotein-releasing system ATP-binding protein LolD">
    <location>
        <begin position="1"/>
        <end position="224"/>
    </location>
</feature>
<feature type="domain" description="ABC transporter" evidence="1">
    <location>
        <begin position="3"/>
        <end position="224"/>
    </location>
</feature>
<feature type="binding site" evidence="1">
    <location>
        <begin position="39"/>
        <end position="46"/>
    </location>
    <ligand>
        <name>ATP</name>
        <dbReference type="ChEBI" id="CHEBI:30616"/>
    </ligand>
</feature>
<keyword id="KW-0067">ATP-binding</keyword>
<keyword id="KW-0997">Cell inner membrane</keyword>
<keyword id="KW-1003">Cell membrane</keyword>
<keyword id="KW-0472">Membrane</keyword>
<keyword id="KW-0547">Nucleotide-binding</keyword>
<keyword id="KW-1185">Reference proteome</keyword>
<keyword id="KW-1278">Translocase</keyword>
<keyword id="KW-0813">Transport</keyword>
<sequence length="224" mass="24063">MVLKASGLTKRFHEGPIDLTVLHGVDLQVHAGETLAIVGASGSGKSTLLHLMGGLDAPTSGQVELMGQTLSALSAAEQGNLRNLHLGFVYQFHHLLPEFSALDNVAMPLWIRRQTPAQSAQTATNMLAIVGLKDRIHHRPSELSGGERQRVAIARALVTQPACVLADEPTGNLDRSTADGVFELMLQLARDFGTAFVLVTHDETLATRCGRRFGLVSGRLSEWG</sequence>
<protein>
    <recommendedName>
        <fullName evidence="1">Lipoprotein-releasing system ATP-binding protein LolD</fullName>
        <ecNumber evidence="1">7.6.2.-</ecNumber>
    </recommendedName>
</protein>
<name>LOLD_POLSJ</name>
<evidence type="ECO:0000255" key="1">
    <source>
        <dbReference type="HAMAP-Rule" id="MF_01708"/>
    </source>
</evidence>
<reference key="1">
    <citation type="journal article" date="2008" name="Appl. Environ. Microbiol.">
        <title>The genome of Polaromonas sp. strain JS666: insights into the evolution of a hydrocarbon- and xenobiotic-degrading bacterium, and features of relevance to biotechnology.</title>
        <authorList>
            <person name="Mattes T.E."/>
            <person name="Alexander A.K."/>
            <person name="Richardson P.M."/>
            <person name="Munk A.C."/>
            <person name="Han C.S."/>
            <person name="Stothard P."/>
            <person name="Coleman N.V."/>
        </authorList>
    </citation>
    <scope>NUCLEOTIDE SEQUENCE [LARGE SCALE GENOMIC DNA]</scope>
    <source>
        <strain>JS666 / ATCC BAA-500</strain>
    </source>
</reference>
<proteinExistence type="inferred from homology"/>
<organism>
    <name type="scientific">Polaromonas sp. (strain JS666 / ATCC BAA-500)</name>
    <dbReference type="NCBI Taxonomy" id="296591"/>
    <lineage>
        <taxon>Bacteria</taxon>
        <taxon>Pseudomonadati</taxon>
        <taxon>Pseudomonadota</taxon>
        <taxon>Betaproteobacteria</taxon>
        <taxon>Burkholderiales</taxon>
        <taxon>Comamonadaceae</taxon>
        <taxon>Polaromonas</taxon>
    </lineage>
</organism>